<comment type="function">
    <text evidence="1">Component of the cytochrome c oxidase, the last enzyme in the mitochondrial electron transport chain which drives oxidative phosphorylation. The respiratory chain contains 3 multisubunit complexes succinate dehydrogenase (complex II, CII), ubiquinol-cytochrome c oxidoreductase (cytochrome b-c1 complex, complex III, CIII) and cytochrome c oxidase (complex IV, CIV), that cooperate to transfer electrons derived from NADH and succinate to molecular oxygen, creating an electrochemical gradient over the inner membrane that drives transmembrane transport and the ATP synthase. Cytochrome c oxidase is the component of the respiratory chain that catalyzes the reduction of oxygen to water. Electrons originating from reduced cytochrome c in the intermembrane space (IMS) are transferred via the dinuclear copper A center (CU(A)) of subunit 2 and heme A of subunit 1 to the active site in subunit 1, a binuclear center (BNC) formed by heme A3 and copper B (CU(B)). The BNC reduces molecular oxygen to 2 water molecules using 4 electrons from cytochrome c in the IMS and 4 protons from the mitochondrial matrix.</text>
</comment>
<comment type="catalytic activity">
    <reaction evidence="1">
        <text>4 Fe(II)-[cytochrome c] + O2 + 8 H(+)(in) = 4 Fe(III)-[cytochrome c] + 2 H2O + 4 H(+)(out)</text>
        <dbReference type="Rhea" id="RHEA:11436"/>
        <dbReference type="Rhea" id="RHEA-COMP:10350"/>
        <dbReference type="Rhea" id="RHEA-COMP:14399"/>
        <dbReference type="ChEBI" id="CHEBI:15377"/>
        <dbReference type="ChEBI" id="CHEBI:15378"/>
        <dbReference type="ChEBI" id="CHEBI:15379"/>
        <dbReference type="ChEBI" id="CHEBI:29033"/>
        <dbReference type="ChEBI" id="CHEBI:29034"/>
        <dbReference type="EC" id="7.1.1.9"/>
    </reaction>
    <physiologicalReaction direction="left-to-right" evidence="1">
        <dbReference type="Rhea" id="RHEA:11437"/>
    </physiologicalReaction>
</comment>
<comment type="subunit">
    <text evidence="1">Component of the cytochrome c oxidase (complex IV, CIV), a multisubunit enzyme composed of a catalytic core of 3 subunits and several supernumerary subunits. The complex exists as a monomer or a dimer and forms supercomplexes (SCs) in the inner mitochondrial membrane with ubiquinol-cytochrome c oxidoreductase (cytochrome b-c1 complex, complex III, CIII).</text>
</comment>
<comment type="subcellular location">
    <subcellularLocation>
        <location evidence="1">Mitochondrion inner membrane</location>
        <topology evidence="1">Multi-pass membrane protein</topology>
    </subcellularLocation>
</comment>
<comment type="similarity">
    <text evidence="4">Belongs to the cytochrome c oxidase subunit 3 family.</text>
</comment>
<keyword id="KW-0472">Membrane</keyword>
<keyword id="KW-0496">Mitochondrion</keyword>
<keyword id="KW-0999">Mitochondrion inner membrane</keyword>
<keyword id="KW-1185">Reference proteome</keyword>
<keyword id="KW-1278">Translocase</keyword>
<keyword id="KW-0812">Transmembrane</keyword>
<keyword id="KW-1133">Transmembrane helix</keyword>
<proteinExistence type="inferred from homology"/>
<accession>P24891</accession>
<feature type="chain" id="PRO_0000183750" description="Cytochrome c oxidase subunit 3">
    <location>
        <begin position="1"/>
        <end position="255"/>
    </location>
</feature>
<feature type="transmembrane region" description="Helical" evidence="2">
    <location>
        <begin position="12"/>
        <end position="32"/>
    </location>
</feature>
<feature type="transmembrane region" description="Helical" evidence="2">
    <location>
        <begin position="34"/>
        <end position="54"/>
    </location>
</feature>
<feature type="transmembrane region" description="Helical" evidence="2">
    <location>
        <begin position="77"/>
        <end position="97"/>
    </location>
</feature>
<feature type="transmembrane region" description="Helical" evidence="2">
    <location>
        <begin position="123"/>
        <end position="143"/>
    </location>
</feature>
<feature type="transmembrane region" description="Helical" evidence="2">
    <location>
        <begin position="156"/>
        <end position="176"/>
    </location>
</feature>
<feature type="transmembrane region" description="Helical" evidence="2">
    <location>
        <begin position="190"/>
        <end position="210"/>
    </location>
</feature>
<feature type="transmembrane region" description="Helical" evidence="2">
    <location>
        <begin position="231"/>
        <end position="251"/>
    </location>
</feature>
<feature type="sequence variant" description="In strain: PB306." evidence="3">
    <original>G</original>
    <variation>W</variation>
    <location>
        <position position="185"/>
    </location>
</feature>
<feature type="sequence variant" description="In strain: PB306." evidence="3">
    <original>F</original>
    <variation>L</variation>
    <location>
        <position position="187"/>
    </location>
</feature>
<feature type="sequence variant" description="In strain: CB4854." evidence="3">
    <original>N</original>
    <variation>S</variation>
    <location>
        <position position="222"/>
    </location>
</feature>
<feature type="sequence variant" description="In strain: CB4856." evidence="3">
    <original>Y</original>
    <variation>N</variation>
    <location>
        <position position="235"/>
    </location>
</feature>
<feature type="sequence conflict" description="In Ref. 1; CAA38157." evidence="4" ref="1">
    <original>C</original>
    <variation>W</variation>
    <location>
        <position position="95"/>
    </location>
</feature>
<reference key="1">
    <citation type="journal article" date="1992" name="Genetics">
        <title>The mitochondrial genomes of two nematodes, Caenorhabditis elegans and Ascaris suum.</title>
        <authorList>
            <person name="Okimoto R."/>
            <person name="Macfarlane J.L."/>
            <person name="Clary D.O."/>
            <person name="Wolstenholme D.R."/>
        </authorList>
    </citation>
    <scope>NUCLEOTIDE SEQUENCE [LARGE SCALE GENOMIC DNA]</scope>
    <source>
        <strain>Bristol N2</strain>
    </source>
</reference>
<reference key="2">
    <citation type="journal article" date="2003" name="Mol. Biol. Evol.">
        <title>Phylogenetics in Caenorhabditis elegans: an analysis of divergence and outcrossing.</title>
        <authorList>
            <person name="Denver D.R."/>
            <person name="Morris K."/>
            <person name="Thomas W.K."/>
        </authorList>
    </citation>
    <scope>NUCLEOTIDE SEQUENCE [GENOMIC DNA] OF 1-96 AND 119-255</scope>
    <scope>VARIANTS TRP-185; LEU-187; SER-222 AND ASN-235</scope>
    <source>
        <strain>AB1</strain>
        <strain>AB2</strain>
        <strain>Bristol N2</strain>
        <strain>CB4852</strain>
        <strain>CB4853</strain>
        <strain>CB4854</strain>
        <strain>CB4855</strain>
        <strain>CB4856</strain>
        <strain>CB4857</strain>
        <strain>CB4858</strain>
        <strain>KR314</strain>
        <strain>PB303</strain>
        <strain>PB306</strain>
        <strain>RW7000</strain>
        <strain>TR403</strain>
    </source>
</reference>
<reference key="3">
    <citation type="journal article" date="1990" name="Nucleic Acids Res.">
        <title>Evidence for the frequent use of TTG as the translation initiation codon of mitochondrial protein genes in the nematodes, Ascaris suum and Caenorhabditis elegans.</title>
        <authorList>
            <person name="Okimoto R."/>
            <person name="Macfarlane J.L."/>
            <person name="Wolstenholme D.R."/>
        </authorList>
    </citation>
    <scope>NUCLEOTIDE SEQUENCE [GENOMIC DNA] OF 1-25</scope>
</reference>
<evidence type="ECO:0000250" key="1">
    <source>
        <dbReference type="UniProtKB" id="P00420"/>
    </source>
</evidence>
<evidence type="ECO:0000255" key="2"/>
<evidence type="ECO:0000269" key="3">
    <source>
    </source>
</evidence>
<evidence type="ECO:0000305" key="4"/>
<evidence type="ECO:0000312" key="5">
    <source>
        <dbReference type="WormBase" id="MTCE.23"/>
    </source>
</evidence>
<sequence length="255" mass="29387">MFHNFHILSLSSYAYNLFFASAGMLSSLVMFFKFGLYELFIFTLFSVLFISFAWGKDIAMEGLSGYHNFFVMDGFKFGVILFVFSEFMFFFCIFCTFFDAALVPVHELGETWSPFGMHLVNPFGVPLLNTIILLSSGVTVTWAHHSLLSNKSCTNSMILTCLLAAYFTGIQLMEYMEASFSIADGVFGSIFYLSTGFHGIHVLCGGLFLAFNFLRLLKNHFNYNHHLGLEFAILYWHFVDVVWLFLFVFVYWWSY</sequence>
<organism>
    <name type="scientific">Caenorhabditis elegans</name>
    <dbReference type="NCBI Taxonomy" id="6239"/>
    <lineage>
        <taxon>Eukaryota</taxon>
        <taxon>Metazoa</taxon>
        <taxon>Ecdysozoa</taxon>
        <taxon>Nematoda</taxon>
        <taxon>Chromadorea</taxon>
        <taxon>Rhabditida</taxon>
        <taxon>Rhabditina</taxon>
        <taxon>Rhabditomorpha</taxon>
        <taxon>Rhabditoidea</taxon>
        <taxon>Rhabditidae</taxon>
        <taxon>Peloderinae</taxon>
        <taxon>Caenorhabditis</taxon>
    </lineage>
</organism>
<name>COX3_CAEEL</name>
<protein>
    <recommendedName>
        <fullName>Cytochrome c oxidase subunit 3</fullName>
        <ecNumber>7.1.1.9</ecNumber>
    </recommendedName>
    <alternativeName>
        <fullName>Cytochrome c oxidase polypeptide III</fullName>
    </alternativeName>
</protein>
<gene>
    <name evidence="5" type="primary">ctc-3</name>
    <name evidence="5" type="synonym">coIII</name>
    <name evidence="5" type="synonym">cox-3</name>
    <name evidence="5" type="ORF">MTCE.23</name>
</gene>
<geneLocation type="mitochondrion"/>
<dbReference type="EC" id="7.1.1.9"/>
<dbReference type="EMBL" id="X54252">
    <property type="protein sequence ID" value="CAA38157.1"/>
    <property type="molecule type" value="Genomic_DNA"/>
</dbReference>
<dbReference type="EMBL" id="AY171178">
    <property type="protein sequence ID" value="AAO16431.1"/>
    <property type="molecule type" value="Genomic_DNA"/>
</dbReference>
<dbReference type="EMBL" id="AY171179">
    <property type="protein sequence ID" value="AAO16433.1"/>
    <property type="molecule type" value="Genomic_DNA"/>
</dbReference>
<dbReference type="EMBL" id="AY171180">
    <property type="protein sequence ID" value="AAO16435.1"/>
    <property type="molecule type" value="Genomic_DNA"/>
</dbReference>
<dbReference type="EMBL" id="AY171181">
    <property type="protein sequence ID" value="AAO16437.1"/>
    <property type="molecule type" value="Genomic_DNA"/>
</dbReference>
<dbReference type="EMBL" id="AY171182">
    <property type="protein sequence ID" value="AAO16439.1"/>
    <property type="molecule type" value="Genomic_DNA"/>
</dbReference>
<dbReference type="EMBL" id="AY171183">
    <property type="protein sequence ID" value="AAO16441.1"/>
    <property type="molecule type" value="Genomic_DNA"/>
</dbReference>
<dbReference type="EMBL" id="AY171184">
    <property type="protein sequence ID" value="AAO16443.1"/>
    <property type="molecule type" value="Genomic_DNA"/>
</dbReference>
<dbReference type="EMBL" id="AY171185">
    <property type="protein sequence ID" value="AAO16445.1"/>
    <property type="molecule type" value="Genomic_DNA"/>
</dbReference>
<dbReference type="EMBL" id="AY171186">
    <property type="protein sequence ID" value="AAO16447.1"/>
    <property type="molecule type" value="Genomic_DNA"/>
</dbReference>
<dbReference type="EMBL" id="AY171187">
    <property type="protein sequence ID" value="AAO16449.1"/>
    <property type="molecule type" value="Genomic_DNA"/>
</dbReference>
<dbReference type="EMBL" id="AY171188">
    <property type="protein sequence ID" value="AAO16451.1"/>
    <property type="molecule type" value="Genomic_DNA"/>
</dbReference>
<dbReference type="EMBL" id="AY171189">
    <property type="protein sequence ID" value="AAO16453.1"/>
    <property type="molecule type" value="Genomic_DNA"/>
</dbReference>
<dbReference type="EMBL" id="AY171190">
    <property type="protein sequence ID" value="AAO16455.1"/>
    <property type="molecule type" value="Genomic_DNA"/>
</dbReference>
<dbReference type="EMBL" id="AY171191">
    <property type="protein sequence ID" value="AAO16457.1"/>
    <property type="molecule type" value="Genomic_DNA"/>
</dbReference>
<dbReference type="EMBL" id="AY171192">
    <property type="protein sequence ID" value="AAO16459.1"/>
    <property type="molecule type" value="Genomic_DNA"/>
</dbReference>
<dbReference type="EMBL" id="AY171193">
    <property type="protein sequence ID" value="AAO16250.1"/>
    <property type="molecule type" value="Genomic_DNA"/>
</dbReference>
<dbReference type="EMBL" id="AY171194">
    <property type="protein sequence ID" value="AAO16254.1"/>
    <property type="molecule type" value="Genomic_DNA"/>
</dbReference>
<dbReference type="EMBL" id="AY171195">
    <property type="protein sequence ID" value="AAO16258.1"/>
    <property type="molecule type" value="Genomic_DNA"/>
</dbReference>
<dbReference type="EMBL" id="AY171196">
    <property type="protein sequence ID" value="AAO16262.1"/>
    <property type="molecule type" value="Genomic_DNA"/>
</dbReference>
<dbReference type="EMBL" id="AY171197">
    <property type="protein sequence ID" value="AAO16266.1"/>
    <property type="molecule type" value="Genomic_DNA"/>
</dbReference>
<dbReference type="EMBL" id="AY171198">
    <property type="protein sequence ID" value="AAO16270.1"/>
    <property type="molecule type" value="Genomic_DNA"/>
</dbReference>
<dbReference type="EMBL" id="AY171199">
    <property type="protein sequence ID" value="AAO16274.1"/>
    <property type="molecule type" value="Genomic_DNA"/>
</dbReference>
<dbReference type="EMBL" id="AY171200">
    <property type="protein sequence ID" value="AAO16278.1"/>
    <property type="molecule type" value="Genomic_DNA"/>
</dbReference>
<dbReference type="EMBL" id="AY171201">
    <property type="protein sequence ID" value="AAO16282.1"/>
    <property type="molecule type" value="Genomic_DNA"/>
</dbReference>
<dbReference type="EMBL" id="AY171202">
    <property type="protein sequence ID" value="AAO16286.1"/>
    <property type="molecule type" value="Genomic_DNA"/>
</dbReference>
<dbReference type="EMBL" id="AY171203">
    <property type="protein sequence ID" value="AAO16290.1"/>
    <property type="molecule type" value="Genomic_DNA"/>
</dbReference>
<dbReference type="EMBL" id="AY171204">
    <property type="protein sequence ID" value="AAO16294.1"/>
    <property type="molecule type" value="Genomic_DNA"/>
</dbReference>
<dbReference type="EMBL" id="AY171205">
    <property type="protein sequence ID" value="AAO16298.1"/>
    <property type="molecule type" value="Genomic_DNA"/>
</dbReference>
<dbReference type="EMBL" id="AY171206">
    <property type="protein sequence ID" value="AAO16302.1"/>
    <property type="molecule type" value="Genomic_DNA"/>
</dbReference>
<dbReference type="EMBL" id="AY171207">
    <property type="protein sequence ID" value="AAO16306.1"/>
    <property type="molecule type" value="Genomic_DNA"/>
</dbReference>
<dbReference type="PIR" id="S26032">
    <property type="entry name" value="S26032"/>
</dbReference>
<dbReference type="SMR" id="P24891"/>
<dbReference type="FunCoup" id="P24891">
    <property type="interactions" value="193"/>
</dbReference>
<dbReference type="STRING" id="6239.MTCE.23.1"/>
<dbReference type="PaxDb" id="6239-MTCE.23"/>
<dbReference type="EnsemblMetazoa" id="MTCE.23.1">
    <property type="protein sequence ID" value="MTCE.23.1"/>
    <property type="gene ID" value="WBGene00010962"/>
</dbReference>
<dbReference type="KEGG" id="cel:KEF34_p06"/>
<dbReference type="AGR" id="WB:WBGene00010962"/>
<dbReference type="CTD" id="4514"/>
<dbReference type="WormBase" id="MTCE.23">
    <property type="protein sequence ID" value="CE34069"/>
    <property type="gene ID" value="WBGene00010962"/>
    <property type="gene designation" value="ctc-3"/>
</dbReference>
<dbReference type="eggNOG" id="KOG4664">
    <property type="taxonomic scope" value="Eukaryota"/>
</dbReference>
<dbReference type="GeneTree" id="ENSGT00390000013064"/>
<dbReference type="HOGENOM" id="CLU_044071_0_0_1"/>
<dbReference type="InParanoid" id="P24891"/>
<dbReference type="PhylomeDB" id="P24891"/>
<dbReference type="PRO" id="PR:P24891"/>
<dbReference type="Proteomes" id="UP000001940">
    <property type="component" value="Mitochondrion"/>
</dbReference>
<dbReference type="Bgee" id="WBGene00010962">
    <property type="expression patterns" value="Expressed in pharyngeal muscle cell (C elegans) and 4 other cell types or tissues"/>
</dbReference>
<dbReference type="GO" id="GO:0005743">
    <property type="term" value="C:mitochondrial inner membrane"/>
    <property type="evidence" value="ECO:0007669"/>
    <property type="project" value="UniProtKB-SubCell"/>
</dbReference>
<dbReference type="GO" id="GO:0005739">
    <property type="term" value="C:mitochondrion"/>
    <property type="evidence" value="ECO:0000318"/>
    <property type="project" value="GO_Central"/>
</dbReference>
<dbReference type="GO" id="GO:0004129">
    <property type="term" value="F:cytochrome-c oxidase activity"/>
    <property type="evidence" value="ECO:0007669"/>
    <property type="project" value="UniProtKB-EC"/>
</dbReference>
<dbReference type="GO" id="GO:0006123">
    <property type="term" value="P:mitochondrial electron transport, cytochrome c to oxygen"/>
    <property type="evidence" value="ECO:0000318"/>
    <property type="project" value="GO_Central"/>
</dbReference>
<dbReference type="CDD" id="cd01665">
    <property type="entry name" value="Cyt_c_Oxidase_III"/>
    <property type="match status" value="1"/>
</dbReference>
<dbReference type="Gene3D" id="1.10.287.70">
    <property type="match status" value="1"/>
</dbReference>
<dbReference type="Gene3D" id="1.20.120.80">
    <property type="entry name" value="Cytochrome c oxidase, subunit III, four-helix bundle"/>
    <property type="match status" value="1"/>
</dbReference>
<dbReference type="InterPro" id="IPR024791">
    <property type="entry name" value="Cyt_c/ubiquinol_Oxase_su3"/>
</dbReference>
<dbReference type="InterPro" id="IPR033945">
    <property type="entry name" value="Cyt_c_oxase_su3_dom"/>
</dbReference>
<dbReference type="InterPro" id="IPR000298">
    <property type="entry name" value="Cyt_c_oxidase-like_su3"/>
</dbReference>
<dbReference type="InterPro" id="IPR035973">
    <property type="entry name" value="Cyt_c_oxidase_su3-like_sf"/>
</dbReference>
<dbReference type="InterPro" id="IPR013833">
    <property type="entry name" value="Cyt_c_oxidase_su3_a-hlx"/>
</dbReference>
<dbReference type="PANTHER" id="PTHR11403:SF7">
    <property type="entry name" value="CYTOCHROME C OXIDASE SUBUNIT 3"/>
    <property type="match status" value="1"/>
</dbReference>
<dbReference type="PANTHER" id="PTHR11403">
    <property type="entry name" value="CYTOCHROME C OXIDASE SUBUNIT III"/>
    <property type="match status" value="1"/>
</dbReference>
<dbReference type="Pfam" id="PF00510">
    <property type="entry name" value="COX3"/>
    <property type="match status" value="1"/>
</dbReference>
<dbReference type="SUPFAM" id="SSF81452">
    <property type="entry name" value="Cytochrome c oxidase subunit III-like"/>
    <property type="match status" value="1"/>
</dbReference>
<dbReference type="PROSITE" id="PS50253">
    <property type="entry name" value="COX3"/>
    <property type="match status" value="1"/>
</dbReference>